<keyword id="KW-0004">4Fe-4S</keyword>
<keyword id="KW-0408">Iron</keyword>
<keyword id="KW-0411">Iron-sulfur</keyword>
<keyword id="KW-0414">Isoprene biosynthesis</keyword>
<keyword id="KW-0479">Metal-binding</keyword>
<keyword id="KW-0560">Oxidoreductase</keyword>
<keyword id="KW-1185">Reference proteome</keyword>
<reference key="1">
    <citation type="journal article" date="2004" name="Proc. Natl. Acad. Sci. U.S.A.">
        <title>Comparison of the genome of the oral pathogen Treponema denticola with other spirochete genomes.</title>
        <authorList>
            <person name="Seshadri R."/>
            <person name="Myers G.S.A."/>
            <person name="Tettelin H."/>
            <person name="Eisen J.A."/>
            <person name="Heidelberg J.F."/>
            <person name="Dodson R.J."/>
            <person name="Davidsen T.M."/>
            <person name="DeBoy R.T."/>
            <person name="Fouts D.E."/>
            <person name="Haft D.H."/>
            <person name="Selengut J."/>
            <person name="Ren Q."/>
            <person name="Brinkac L.M."/>
            <person name="Madupu R."/>
            <person name="Kolonay J.F."/>
            <person name="Durkin S.A."/>
            <person name="Daugherty S.C."/>
            <person name="Shetty J."/>
            <person name="Shvartsbeyn A."/>
            <person name="Gebregeorgis E."/>
            <person name="Geer K."/>
            <person name="Tsegaye G."/>
            <person name="Malek J.A."/>
            <person name="Ayodeji B."/>
            <person name="Shatsman S."/>
            <person name="McLeod M.P."/>
            <person name="Smajs D."/>
            <person name="Howell J.K."/>
            <person name="Pal S."/>
            <person name="Amin A."/>
            <person name="Vashisth P."/>
            <person name="McNeill T.Z."/>
            <person name="Xiang Q."/>
            <person name="Sodergren E."/>
            <person name="Baca E."/>
            <person name="Weinstock G.M."/>
            <person name="Norris S.J."/>
            <person name="Fraser C.M."/>
            <person name="Paulsen I.T."/>
        </authorList>
    </citation>
    <scope>NUCLEOTIDE SEQUENCE [LARGE SCALE GENOMIC DNA]</scope>
    <source>
        <strain>ATCC 35405 / DSM 14222 / CIP 103919 / JCM 8153 / KCTC 15104</strain>
    </source>
</reference>
<sequence length="387" mass="42460">MNSIKLPRTIHIGGKGQVKKLTLGGTSPILLQTMWKESLLGADLLSIVKSLNELEQLGCDIVRFAVPDMDSAEQFVKLTRLTEMPLVADIHFDYKLALRCMDGDTAKIRINPGNIGSKEKTEEVIRKAKDTGTAIRIGVNSGSLPSDLKKKIEEANSKRNLSGDKKALDDEISLLRADTLTEAAARELEIFEKADFKDAVVSMKASNVRETVMANEIFAKKFDNPLHLGVTEAGPLIQGIVKSTIAFYRLLEQNIGSTIRVSLSDSCENEVIAGREILTECGKRQGGIRLISCPRCGRKGFDVQAFVKRWQTKLLSEKKDISIAVMGCVVNGPGEGKHADLGITGAEDSVIIFKHGAITKRLDLKKLTEEEKIKAVDKAFIEELQSL</sequence>
<dbReference type="EC" id="1.17.7.3" evidence="1"/>
<dbReference type="EMBL" id="AE017226">
    <property type="protein sequence ID" value="AAS11783.1"/>
    <property type="molecule type" value="Genomic_DNA"/>
</dbReference>
<dbReference type="RefSeq" id="NP_971872.1">
    <property type="nucleotide sequence ID" value="NC_002967.9"/>
</dbReference>
<dbReference type="RefSeq" id="WP_002678768.1">
    <property type="nucleotide sequence ID" value="NC_002967.9"/>
</dbReference>
<dbReference type="SMR" id="Q73N90"/>
<dbReference type="STRING" id="243275.TDE_1265"/>
<dbReference type="PaxDb" id="243275-TDE_1265"/>
<dbReference type="GeneID" id="2740558"/>
<dbReference type="KEGG" id="tde:TDE_1265"/>
<dbReference type="PATRIC" id="fig|243275.7.peg.1216"/>
<dbReference type="eggNOG" id="COG0821">
    <property type="taxonomic scope" value="Bacteria"/>
</dbReference>
<dbReference type="HOGENOM" id="CLU_042258_0_0_12"/>
<dbReference type="OrthoDB" id="9803214at2"/>
<dbReference type="UniPathway" id="UPA00056">
    <property type="reaction ID" value="UER00096"/>
</dbReference>
<dbReference type="Proteomes" id="UP000008212">
    <property type="component" value="Chromosome"/>
</dbReference>
<dbReference type="GO" id="GO:0051539">
    <property type="term" value="F:4 iron, 4 sulfur cluster binding"/>
    <property type="evidence" value="ECO:0007669"/>
    <property type="project" value="UniProtKB-UniRule"/>
</dbReference>
<dbReference type="GO" id="GO:0046429">
    <property type="term" value="F:4-hydroxy-3-methylbut-2-en-1-yl diphosphate synthase activity (ferredoxin)"/>
    <property type="evidence" value="ECO:0007669"/>
    <property type="project" value="UniProtKB-UniRule"/>
</dbReference>
<dbReference type="GO" id="GO:0141197">
    <property type="term" value="F:4-hydroxy-3-methylbut-2-enyl-diphosphate synthase activity (flavodoxin)"/>
    <property type="evidence" value="ECO:0007669"/>
    <property type="project" value="UniProtKB-EC"/>
</dbReference>
<dbReference type="GO" id="GO:0005506">
    <property type="term" value="F:iron ion binding"/>
    <property type="evidence" value="ECO:0007669"/>
    <property type="project" value="InterPro"/>
</dbReference>
<dbReference type="GO" id="GO:0019288">
    <property type="term" value="P:isopentenyl diphosphate biosynthetic process, methylerythritol 4-phosphate pathway"/>
    <property type="evidence" value="ECO:0007669"/>
    <property type="project" value="UniProtKB-UniRule"/>
</dbReference>
<dbReference type="GO" id="GO:0016114">
    <property type="term" value="P:terpenoid biosynthetic process"/>
    <property type="evidence" value="ECO:0007669"/>
    <property type="project" value="InterPro"/>
</dbReference>
<dbReference type="Gene3D" id="3.20.20.20">
    <property type="entry name" value="Dihydropteroate synthase-like"/>
    <property type="match status" value="1"/>
</dbReference>
<dbReference type="Gene3D" id="3.30.413.10">
    <property type="entry name" value="Sulfite Reductase Hemoprotein, domain 1"/>
    <property type="match status" value="1"/>
</dbReference>
<dbReference type="HAMAP" id="MF_00159">
    <property type="entry name" value="IspG"/>
    <property type="match status" value="1"/>
</dbReference>
<dbReference type="InterPro" id="IPR011005">
    <property type="entry name" value="Dihydropteroate_synth-like_sf"/>
</dbReference>
<dbReference type="InterPro" id="IPR016425">
    <property type="entry name" value="IspG_bac"/>
</dbReference>
<dbReference type="InterPro" id="IPR004588">
    <property type="entry name" value="IspG_bac-typ"/>
</dbReference>
<dbReference type="InterPro" id="IPR045854">
    <property type="entry name" value="NO2/SO3_Rdtase_4Fe4S_sf"/>
</dbReference>
<dbReference type="NCBIfam" id="TIGR00612">
    <property type="entry name" value="ispG_gcpE"/>
    <property type="match status" value="1"/>
</dbReference>
<dbReference type="NCBIfam" id="NF001540">
    <property type="entry name" value="PRK00366.1"/>
    <property type="match status" value="1"/>
</dbReference>
<dbReference type="PANTHER" id="PTHR30454">
    <property type="entry name" value="4-HYDROXY-3-METHYLBUT-2-EN-1-YL DIPHOSPHATE SYNTHASE"/>
    <property type="match status" value="1"/>
</dbReference>
<dbReference type="PANTHER" id="PTHR30454:SF0">
    <property type="entry name" value="4-HYDROXY-3-METHYLBUT-2-EN-1-YL DIPHOSPHATE SYNTHASE (FERREDOXIN), CHLOROPLASTIC"/>
    <property type="match status" value="1"/>
</dbReference>
<dbReference type="Pfam" id="PF04551">
    <property type="entry name" value="GcpE"/>
    <property type="match status" value="1"/>
</dbReference>
<dbReference type="PIRSF" id="PIRSF004640">
    <property type="entry name" value="IspG"/>
    <property type="match status" value="1"/>
</dbReference>
<dbReference type="SUPFAM" id="SSF56014">
    <property type="entry name" value="Nitrite and sulphite reductase 4Fe-4S domain-like"/>
    <property type="match status" value="1"/>
</dbReference>
<accession>Q73N90</accession>
<comment type="function">
    <text evidence="1">Converts 2C-methyl-D-erythritol 2,4-cyclodiphosphate (ME-2,4cPP) into 1-hydroxy-2-methyl-2-(E)-butenyl 4-diphosphate.</text>
</comment>
<comment type="catalytic activity">
    <reaction evidence="1">
        <text>(2E)-4-hydroxy-3-methylbut-2-enyl diphosphate + oxidized [flavodoxin] + H2O + 2 H(+) = 2-C-methyl-D-erythritol 2,4-cyclic diphosphate + reduced [flavodoxin]</text>
        <dbReference type="Rhea" id="RHEA:43604"/>
        <dbReference type="Rhea" id="RHEA-COMP:10622"/>
        <dbReference type="Rhea" id="RHEA-COMP:10623"/>
        <dbReference type="ChEBI" id="CHEBI:15377"/>
        <dbReference type="ChEBI" id="CHEBI:15378"/>
        <dbReference type="ChEBI" id="CHEBI:57618"/>
        <dbReference type="ChEBI" id="CHEBI:58210"/>
        <dbReference type="ChEBI" id="CHEBI:58483"/>
        <dbReference type="ChEBI" id="CHEBI:128753"/>
        <dbReference type="EC" id="1.17.7.3"/>
    </reaction>
</comment>
<comment type="cofactor">
    <cofactor evidence="1">
        <name>[4Fe-4S] cluster</name>
        <dbReference type="ChEBI" id="CHEBI:49883"/>
    </cofactor>
    <text evidence="1">Binds 1 [4Fe-4S] cluster.</text>
</comment>
<comment type="pathway">
    <text evidence="1">Isoprenoid biosynthesis; isopentenyl diphosphate biosynthesis via DXP pathway; isopentenyl diphosphate from 1-deoxy-D-xylulose 5-phosphate: step 5/6.</text>
</comment>
<comment type="similarity">
    <text evidence="1">Belongs to the IspG family.</text>
</comment>
<protein>
    <recommendedName>
        <fullName evidence="1">4-hydroxy-3-methylbut-2-en-1-yl diphosphate synthase (flavodoxin)</fullName>
        <ecNumber evidence="1">1.17.7.3</ecNumber>
    </recommendedName>
    <alternativeName>
        <fullName evidence="1">1-hydroxy-2-methyl-2-(E)-butenyl 4-diphosphate synthase</fullName>
    </alternativeName>
</protein>
<gene>
    <name evidence="1" type="primary">ispG</name>
    <name type="ordered locus">TDE_1265</name>
</gene>
<feature type="chain" id="PRO_0000190647" description="4-hydroxy-3-methylbut-2-en-1-yl diphosphate synthase (flavodoxin)">
    <location>
        <begin position="1"/>
        <end position="387"/>
    </location>
</feature>
<feature type="binding site" evidence="1">
    <location>
        <position position="293"/>
    </location>
    <ligand>
        <name>[4Fe-4S] cluster</name>
        <dbReference type="ChEBI" id="CHEBI:49883"/>
    </ligand>
</feature>
<feature type="binding site" evidence="1">
    <location>
        <position position="296"/>
    </location>
    <ligand>
        <name>[4Fe-4S] cluster</name>
        <dbReference type="ChEBI" id="CHEBI:49883"/>
    </ligand>
</feature>
<feature type="binding site" evidence="1">
    <location>
        <position position="328"/>
    </location>
    <ligand>
        <name>[4Fe-4S] cluster</name>
        <dbReference type="ChEBI" id="CHEBI:49883"/>
    </ligand>
</feature>
<feature type="binding site" evidence="1">
    <location>
        <position position="335"/>
    </location>
    <ligand>
        <name>[4Fe-4S] cluster</name>
        <dbReference type="ChEBI" id="CHEBI:49883"/>
    </ligand>
</feature>
<name>ISPG_TREDE</name>
<organism>
    <name type="scientific">Treponema denticola (strain ATCC 35405 / DSM 14222 / CIP 103919 / JCM 8153 / KCTC 15104)</name>
    <dbReference type="NCBI Taxonomy" id="243275"/>
    <lineage>
        <taxon>Bacteria</taxon>
        <taxon>Pseudomonadati</taxon>
        <taxon>Spirochaetota</taxon>
        <taxon>Spirochaetia</taxon>
        <taxon>Spirochaetales</taxon>
        <taxon>Treponemataceae</taxon>
        <taxon>Treponema</taxon>
    </lineage>
</organism>
<evidence type="ECO:0000255" key="1">
    <source>
        <dbReference type="HAMAP-Rule" id="MF_00159"/>
    </source>
</evidence>
<proteinExistence type="inferred from homology"/>